<organism>
    <name type="scientific">Homo sapiens</name>
    <name type="common">Human</name>
    <dbReference type="NCBI Taxonomy" id="9606"/>
    <lineage>
        <taxon>Eukaryota</taxon>
        <taxon>Metazoa</taxon>
        <taxon>Chordata</taxon>
        <taxon>Craniata</taxon>
        <taxon>Vertebrata</taxon>
        <taxon>Euteleostomi</taxon>
        <taxon>Mammalia</taxon>
        <taxon>Eutheria</taxon>
        <taxon>Euarchontoglires</taxon>
        <taxon>Primates</taxon>
        <taxon>Haplorrhini</taxon>
        <taxon>Catarrhini</taxon>
        <taxon>Hominidae</taxon>
        <taxon>Homo</taxon>
    </lineage>
</organism>
<evidence type="ECO:0000250" key="1"/>
<evidence type="ECO:0000250" key="2">
    <source>
        <dbReference type="UniProtKB" id="Q5U3Z6"/>
    </source>
</evidence>
<evidence type="ECO:0000255" key="3"/>
<evidence type="ECO:0000269" key="4">
    <source>
    </source>
</evidence>
<evidence type="ECO:0000303" key="5">
    <source>
    </source>
</evidence>
<evidence type="ECO:0000305" key="6"/>
<evidence type="ECO:0000312" key="7">
    <source>
        <dbReference type="HGNC" id="HGNC:26344"/>
    </source>
</evidence>
<keyword id="KW-0025">Alternative splicing</keyword>
<keyword id="KW-0970">Cilium biogenesis/degradation</keyword>
<keyword id="KW-0175">Coiled coil</keyword>
<keyword id="KW-0963">Cytoplasm</keyword>
<keyword id="KW-0597">Phosphoprotein</keyword>
<keyword id="KW-1267">Proteomics identification</keyword>
<keyword id="KW-1185">Reference proteome</keyword>
<sequence>MENQAHNTMGTSPCEAELQELMEQIDIMVSNKKMDWERKMRALETRLDLRDQELANAQTCLDQKGQEVGLLRQKLDSLEKCNLAMTQNYEGQLQSLKAQFSKLTNNFEKLRLHQMKQNKVPRKELPHLKEEIPFELSNLNQKLEEFRAKSREWDKQEILYQTHLISLDAQQKLLSEKCNQFQKQAQSYQTQLNGKKQCLEDSSSEIPRLICDPDPNCEINERDEFIIEKLKSAVNEIALSRNKLQDENQKLLQELKMYQRQCQAMEAGLSEVKSELQSRDDLLRIIEMERLQLHRELLKIGECQNAQGNKTRLESSYLPSIKEPERKIKELFSVMQDQPNHEKELNKIRSQLQQVEEYHNSEQERMRNEISDLTEELHQKEITIATVTKKAALLEKQLKMELEIKEKMLAKQKVSDMKYKAVRTENTHLKGMMGDLDPGEYMSMDFTNREQSRHTSINKLQYENERLRNDLAKLHVNGKSTWTNQNTYEETGRYAYQSQIKVEQNEERLSHDCEPNRSTMPPLPPSTFQAKEMTSPLVSDDDVFPLSPPDMSFPASLAAQHFLLEEEKRAKELEKLLNTHIDELQRHTEFTLNKYSKLKQNRHI</sequence>
<comment type="function">
    <text evidence="1">Key structural component of the deuterosome, a structure that promotes de novo centriole amplification in multiciliated cells. Deuterosome-mediated centriole amplification occurs in terminally differentiated multiciliated cells and can generate more than 100 centrioles. Probably sufficient for the specification and formation of the deuterosome inner core. Interacts with CEP152 and recruits PLK4 to activate centriole biogenesis (By similarity).</text>
</comment>
<comment type="subunit">
    <text evidence="1">Interacts with CEP152; the interaction is mutually exclusive with CEP63.</text>
</comment>
<comment type="interaction">
    <interactant intactId="EBI-748597">
        <id>Q05D60</id>
    </interactant>
    <interactant intactId="EBI-7121510">
        <id>P49418</id>
        <label>AMPH</label>
    </interactant>
    <organismsDiffer>false</organismsDiffer>
    <experiments>3</experiments>
</comment>
<comment type="interaction">
    <interactant intactId="EBI-748597">
        <id>Q05D60</id>
    </interactant>
    <interactant intactId="EBI-10186132">
        <id>Q0P5N6</id>
        <label>ARL16</label>
    </interactant>
    <organismsDiffer>false</organismsDiffer>
    <experiments>3</experiments>
</comment>
<comment type="interaction">
    <interactant intactId="EBI-748597">
        <id>Q05D60</id>
    </interactant>
    <interactant intactId="EBI-5666615">
        <id>Q5PSV4</id>
        <label>BRMS1L</label>
    </interactant>
    <organismsDiffer>false</organismsDiffer>
    <experiments>3</experiments>
</comment>
<comment type="interaction">
    <interactant intactId="EBI-748597">
        <id>Q05D60</id>
    </interactant>
    <interactant intactId="EBI-10175300">
        <id>Q8TD31-3</id>
        <label>CCHCR1</label>
    </interactant>
    <organismsDiffer>false</organismsDiffer>
    <experiments>3</experiments>
</comment>
<comment type="interaction">
    <interactant intactId="EBI-748597">
        <id>Q05D60</id>
    </interactant>
    <interactant intactId="EBI-11752486">
        <id>Q86XR8-3</id>
        <label>CEP57</label>
    </interactant>
    <organismsDiffer>false</organismsDiffer>
    <experiments>3</experiments>
</comment>
<comment type="interaction">
    <interactant intactId="EBI-748597">
        <id>Q05D60</id>
    </interactant>
    <interactant intactId="EBI-742054">
        <id>Q96D03</id>
        <label>DDIT4L</label>
    </interactant>
    <organismsDiffer>false</organismsDiffer>
    <experiments>3</experiments>
</comment>
<comment type="interaction">
    <interactant intactId="EBI-748597">
        <id>Q05D60</id>
    </interactant>
    <interactant intactId="EBI-748597">
        <id>Q05D60</id>
        <label>DEUP1</label>
    </interactant>
    <organismsDiffer>false</organismsDiffer>
    <experiments>8</experiments>
</comment>
<comment type="interaction">
    <interactant intactId="EBI-748597">
        <id>Q05D60</id>
    </interactant>
    <interactant intactId="EBI-742953">
        <id>Q9BY27</id>
        <label>DGCR6L</label>
    </interactant>
    <organismsDiffer>false</organismsDiffer>
    <experiments>9</experiments>
</comment>
<comment type="interaction">
    <interactant intactId="EBI-748597">
        <id>Q05D60</id>
    </interactant>
    <interactant intactId="EBI-11984733">
        <id>O60941-5</id>
        <label>DTNB</label>
    </interactant>
    <organismsDiffer>false</organismsDiffer>
    <experiments>3</experiments>
</comment>
<comment type="interaction">
    <interactant intactId="EBI-748597">
        <id>Q05D60</id>
    </interactant>
    <interactant intactId="EBI-2834260">
        <id>P62508</id>
        <label>ESRRG</label>
    </interactant>
    <organismsDiffer>false</organismsDiffer>
    <experiments>3</experiments>
</comment>
<comment type="interaction">
    <interactant intactId="EBI-748597">
        <id>Q05D60</id>
    </interactant>
    <interactant intactId="EBI-12001340">
        <id>P62508-3</id>
        <label>ESRRG</label>
    </interactant>
    <organismsDiffer>false</organismsDiffer>
    <experiments>3</experiments>
</comment>
<comment type="interaction">
    <interactant intactId="EBI-748597">
        <id>Q05D60</id>
    </interactant>
    <interactant intactId="EBI-949824">
        <id>O00471</id>
        <label>EXOC5</label>
    </interactant>
    <organismsDiffer>false</organismsDiffer>
    <experiments>11</experiments>
</comment>
<comment type="interaction">
    <interactant intactId="EBI-748597">
        <id>Q05D60</id>
    </interactant>
    <interactant intactId="EBI-742802">
        <id>Q9Y247</id>
        <label>FAM50B</label>
    </interactant>
    <organismsDiffer>false</organismsDiffer>
    <experiments>3</experiments>
</comment>
<comment type="interaction">
    <interactant intactId="EBI-748597">
        <id>Q05D60</id>
    </interactant>
    <interactant intactId="EBI-10244131">
        <id>Q8TES7-6</id>
        <label>FBF1</label>
    </interactant>
    <organismsDiffer>false</organismsDiffer>
    <experiments>6</experiments>
</comment>
<comment type="interaction">
    <interactant intactId="EBI-748597">
        <id>Q05D60</id>
    </interactant>
    <interactant intactId="EBI-744104">
        <id>P55040</id>
        <label>GEM</label>
    </interactant>
    <organismsDiffer>false</organismsDiffer>
    <experiments>6</experiments>
</comment>
<comment type="interaction">
    <interactant intactId="EBI-748597">
        <id>Q05D60</id>
    </interactant>
    <interactant intactId="EBI-618309">
        <id>Q08379</id>
        <label>GOLGA2</label>
    </interactant>
    <organismsDiffer>false</organismsDiffer>
    <experiments>6</experiments>
</comment>
<comment type="interaction">
    <interactant intactId="EBI-748597">
        <id>Q05D60</id>
    </interactant>
    <interactant intactId="EBI-2558143">
        <id>Q9BT25</id>
        <label>HAUS8</label>
    </interactant>
    <organismsDiffer>false</organismsDiffer>
    <experiments>3</experiments>
</comment>
<comment type="interaction">
    <interactant intactId="EBI-748597">
        <id>Q05D60</id>
    </interactant>
    <interactant intactId="EBI-466029">
        <id>P42858</id>
        <label>HTT</label>
    </interactant>
    <organismsDiffer>false</organismsDiffer>
    <experiments>15</experiments>
</comment>
<comment type="interaction">
    <interactant intactId="EBI-748597">
        <id>Q05D60</id>
    </interactant>
    <interactant intactId="EBI-745127">
        <id>O14879</id>
        <label>IFIT3</label>
    </interactant>
    <organismsDiffer>false</organismsDiffer>
    <experiments>4</experiments>
</comment>
<comment type="interaction">
    <interactant intactId="EBI-748597">
        <id>Q05D60</id>
    </interactant>
    <interactant intactId="EBI-744203">
        <id>Q8IY31</id>
        <label>IFT20</label>
    </interactant>
    <organismsDiffer>false</organismsDiffer>
    <experiments>4</experiments>
</comment>
<comment type="interaction">
    <interactant intactId="EBI-748597">
        <id>Q05D60</id>
    </interactant>
    <interactant intactId="EBI-488533">
        <id>Q8WYH8</id>
        <label>ING5</label>
    </interactant>
    <organismsDiffer>false</organismsDiffer>
    <experiments>3</experiments>
</comment>
<comment type="interaction">
    <interactant intactId="EBI-748597">
        <id>Q05D60</id>
    </interactant>
    <interactant intactId="EBI-4397613">
        <id>Q7L273</id>
        <label>KCTD9</label>
    </interactant>
    <organismsDiffer>false</organismsDiffer>
    <experiments>3</experiments>
</comment>
<comment type="interaction">
    <interactant intactId="EBI-748597">
        <id>Q05D60</id>
    </interactant>
    <interactant intactId="EBI-2125614">
        <id>Q9BVG8</id>
        <label>KIFC3</label>
    </interactant>
    <organismsDiffer>false</organismsDiffer>
    <experiments>3</experiments>
</comment>
<comment type="interaction">
    <interactant intactId="EBI-748597">
        <id>Q05D60</id>
    </interactant>
    <interactant intactId="EBI-14069005">
        <id>Q9BVG8-5</id>
        <label>KIFC3</label>
    </interactant>
    <organismsDiffer>false</organismsDiffer>
    <experiments>5</experiments>
</comment>
<comment type="interaction">
    <interactant intactId="EBI-748597">
        <id>Q05D60</id>
    </interactant>
    <interactant intactId="EBI-739566">
        <id>P19012</id>
        <label>KRT15</label>
    </interactant>
    <organismsDiffer>false</organismsDiffer>
    <experiments>6</experiments>
</comment>
<comment type="interaction">
    <interactant intactId="EBI-748597">
        <id>Q05D60</id>
    </interactant>
    <interactant intactId="EBI-11980489">
        <id>Q7Z3Y7</id>
        <label>KRT28</label>
    </interactant>
    <organismsDiffer>false</organismsDiffer>
    <experiments>3</experiments>
</comment>
<comment type="interaction">
    <interactant intactId="EBI-748597">
        <id>Q05D60</id>
    </interactant>
    <interactant intactId="EBI-2430095">
        <id>P12035</id>
        <label>KRT3</label>
    </interactant>
    <organismsDiffer>false</organismsDiffer>
    <experiments>3</experiments>
</comment>
<comment type="interaction">
    <interactant intactId="EBI-748597">
        <id>Q05D60</id>
    </interactant>
    <interactant intactId="EBI-739832">
        <id>Q8TBB1</id>
        <label>LNX1</label>
    </interactant>
    <organismsDiffer>false</organismsDiffer>
    <experiments>3</experiments>
</comment>
<comment type="interaction">
    <interactant intactId="EBI-748597">
        <id>Q05D60</id>
    </interactant>
    <interactant intactId="EBI-14086479">
        <id>Q8IVT4</id>
        <label>MGC50722</label>
    </interactant>
    <organismsDiffer>false</organismsDiffer>
    <experiments>3</experiments>
</comment>
<comment type="interaction">
    <interactant intactId="EBI-748597">
        <id>Q05D60</id>
    </interactant>
    <interactant intactId="EBI-741158">
        <id>Q96HA8</id>
        <label>NTAQ1</label>
    </interactant>
    <organismsDiffer>false</organismsDiffer>
    <experiments>3</experiments>
</comment>
<comment type="interaction">
    <interactant intactId="EBI-748597">
        <id>Q05D60</id>
    </interactant>
    <interactant intactId="EBI-348567">
        <id>O75928-2</id>
        <label>PIAS2</label>
    </interactant>
    <organismsDiffer>false</organismsDiffer>
    <experiments>3</experiments>
</comment>
<comment type="interaction">
    <interactant intactId="EBI-748597">
        <id>Q05D60</id>
    </interactant>
    <interactant intactId="EBI-1105153">
        <id>Q96KQ4</id>
        <label>PPP1R13B</label>
    </interactant>
    <organismsDiffer>false</organismsDiffer>
    <experiments>3</experiments>
</comment>
<comment type="interaction">
    <interactant intactId="EBI-748597">
        <id>Q05D60</id>
    </interactant>
    <interactant intactId="EBI-11984663">
        <id>Q06455-2</id>
        <label>RUNX1T1</label>
    </interactant>
    <organismsDiffer>false</organismsDiffer>
    <experiments>3</experiments>
</comment>
<comment type="interaction">
    <interactant intactId="EBI-748597">
        <id>Q05D60</id>
    </interactant>
    <interactant intactId="EBI-2902468">
        <id>P12757</id>
        <label>SKIL</label>
    </interactant>
    <organismsDiffer>false</organismsDiffer>
    <experiments>3</experiments>
</comment>
<comment type="interaction">
    <interactant intactId="EBI-748597">
        <id>Q05D60</id>
    </interactant>
    <interactant intactId="EBI-80140">
        <id>P63165</id>
        <label>SUMO1</label>
    </interactant>
    <organismsDiffer>false</organismsDiffer>
    <experiments>3</experiments>
</comment>
<comment type="interaction">
    <interactant intactId="EBI-748597">
        <id>Q05D60</id>
    </interactant>
    <interactant intactId="EBI-8787464">
        <id>Q9NU19</id>
        <label>TBC1D22B</label>
    </interactant>
    <organismsDiffer>false</organismsDiffer>
    <experiments>4</experiments>
</comment>
<comment type="interaction">
    <interactant intactId="EBI-748597">
        <id>Q05D60</id>
    </interactant>
    <interactant intactId="EBI-10178002">
        <id>P0C1Z6-2</id>
        <label>TFPT</label>
    </interactant>
    <organismsDiffer>false</organismsDiffer>
    <experiments>3</experiments>
</comment>
<comment type="interaction">
    <interactant intactId="EBI-748597">
        <id>Q05D60</id>
    </interactant>
    <interactant intactId="EBI-2130429">
        <id>Q9BYV2</id>
        <label>TRIM54</label>
    </interactant>
    <organismsDiffer>false</organismsDiffer>
    <experiments>6</experiments>
</comment>
<comment type="interaction">
    <interactant intactId="EBI-748597">
        <id>Q05D60</id>
    </interactant>
    <interactant intactId="EBI-359793">
        <id>P40222</id>
        <label>TXLNA</label>
    </interactant>
    <organismsDiffer>false</organismsDiffer>
    <experiments>11</experiments>
</comment>
<comment type="interaction">
    <interactant intactId="EBI-748597">
        <id>Q05D60</id>
    </interactant>
    <interactant intactId="EBI-6116822">
        <id>Q8N3L3</id>
        <label>TXLNB</label>
    </interactant>
    <organismsDiffer>false</organismsDiffer>
    <experiments>11</experiments>
</comment>
<comment type="interaction">
    <interactant intactId="EBI-748597">
        <id>Q05D60</id>
    </interactant>
    <interactant intactId="EBI-739895">
        <id>Q8N6Y0</id>
        <label>USHBP1</label>
    </interactant>
    <organismsDiffer>false</organismsDiffer>
    <experiments>3</experiments>
</comment>
<comment type="interaction">
    <interactant intactId="EBI-748597">
        <id>Q05D60</id>
    </interactant>
    <interactant intactId="EBI-10237226">
        <id>Q15911-2</id>
        <label>ZFHX3</label>
    </interactant>
    <organismsDiffer>false</organismsDiffer>
    <experiments>3</experiments>
</comment>
<comment type="interaction">
    <interactant intactId="EBI-748597">
        <id>Q05D60</id>
    </interactant>
    <interactant intactId="EBI-2688184">
        <id>Q9UQR1</id>
        <label>ZNF148</label>
    </interactant>
    <organismsDiffer>false</organismsDiffer>
    <experiments>3</experiments>
</comment>
<comment type="interaction">
    <interactant intactId="EBI-748597">
        <id>Q05D60</id>
    </interactant>
    <interactant intactId="EBI-2555738">
        <id>Q14592</id>
        <label>ZNF460</label>
    </interactant>
    <organismsDiffer>false</organismsDiffer>
    <experiments>3</experiments>
</comment>
<comment type="interaction">
    <interactant intactId="EBI-748597">
        <id>Q05D60</id>
    </interactant>
    <interactant intactId="EBI-10172590">
        <id>Q7Z3I7</id>
        <label>ZNF572</label>
    </interactant>
    <organismsDiffer>false</organismsDiffer>
    <experiments>9</experiments>
</comment>
<comment type="interaction">
    <interactant intactId="EBI-748597">
        <id>Q05D60</id>
    </interactant>
    <interactant intactId="EBI-625509">
        <id>Q8N720</id>
        <label>ZNF655</label>
    </interactant>
    <organismsDiffer>false</organismsDiffer>
    <experiments>3</experiments>
</comment>
<comment type="interaction">
    <interactant intactId="EBI-748597">
        <id>Q05D60</id>
    </interactant>
    <interactant intactId="EBI-5667516">
        <id>Q9Y2P0</id>
        <label>ZNF835</label>
    </interactant>
    <organismsDiffer>false</organismsDiffer>
    <experiments>3</experiments>
</comment>
<comment type="subcellular location">
    <subcellularLocation>
        <location evidence="1">Cytoplasm</location>
    </subcellularLocation>
    <text evidence="1">Localizes to the deuterosome.</text>
</comment>
<comment type="alternative products">
    <event type="alternative splicing"/>
    <isoform>
        <id>Q05D60-1</id>
        <name>1</name>
        <sequence type="displayed"/>
    </isoform>
    <isoform>
        <id>Q05D60-2</id>
        <name>2</name>
        <sequence type="described" ref="VSP_027367 VSP_027368"/>
    </isoform>
</comment>
<comment type="miscellaneous">
    <text>CEP63 and DEUP1 paralogs are both involved in centriole amplification: while CEP63 mediates mother-centriole-dependent centriole duplication, DEUP1 mediates de novo centriole amplification in multiciliated cells.</text>
</comment>
<comment type="similarity">
    <text evidence="6">Belongs to the CEP63 family.</text>
</comment>
<comment type="caution">
    <text evidence="6">It is uncertain whether Met-1 or Met-9 is the initiator.</text>
</comment>
<proteinExistence type="evidence at protein level"/>
<name>DEUP1_HUMAN</name>
<accession>Q05D60</accession>
<accession>E9PJR5</accession>
<accession>Q8NEF1</accession>
<accession>Q96LL7</accession>
<feature type="chain" id="PRO_0000297829" description="Deuterosome assembly protein 1">
    <location>
        <begin position="1"/>
        <end position="604"/>
    </location>
</feature>
<feature type="coiled-coil region" evidence="3">
    <location>
        <begin position="14"/>
        <end position="59"/>
    </location>
</feature>
<feature type="coiled-coil region" evidence="3">
    <location>
        <begin position="85"/>
        <end position="197"/>
    </location>
</feature>
<feature type="coiled-coil region" evidence="3">
    <location>
        <begin position="226"/>
        <end position="278"/>
    </location>
</feature>
<feature type="coiled-coil region" evidence="3">
    <location>
        <begin position="336"/>
        <end position="399"/>
    </location>
</feature>
<feature type="coiled-coil region" evidence="3">
    <location>
        <begin position="558"/>
        <end position="601"/>
    </location>
</feature>
<feature type="modified residue" description="Phosphoserine" evidence="2">
    <location>
        <position position="547"/>
    </location>
</feature>
<feature type="splice variant" id="VSP_027367" description="In isoform 2." evidence="5">
    <location>
        <begin position="1"/>
        <end position="262"/>
    </location>
</feature>
<feature type="splice variant" id="VSP_027368" description="In isoform 2." evidence="5">
    <original>Q</original>
    <variation>M</variation>
    <location>
        <position position="263"/>
    </location>
</feature>
<feature type="sequence variant" id="VAR_050759" description="In dbSNP:rs34205920.">
    <original>S</original>
    <variation>F</variation>
    <location>
        <position position="175"/>
    </location>
</feature>
<feature type="sequence variant" id="VAR_059601" description="In dbSNP:rs12282288.">
    <original>E</original>
    <variation>G</variation>
    <location>
        <position position="440"/>
    </location>
</feature>
<feature type="sequence variant" id="VAR_050760" description="In dbSNP:rs12288277.">
    <original>E</original>
    <variation>Q</variation>
    <location>
        <position position="440"/>
    </location>
</feature>
<feature type="sequence variant" id="VAR_050761" description="In dbSNP:rs2259633." evidence="4">
    <original>Q</original>
    <variation>K</variation>
    <location>
        <position position="504"/>
    </location>
</feature>
<feature type="sequence conflict" description="In Ref. 3; BAB71673." evidence="6" ref="3">
    <original>E</original>
    <variation>R</variation>
    <location>
        <position position="440"/>
    </location>
</feature>
<protein>
    <recommendedName>
        <fullName evidence="7">Deuterosome assembly protein 1</fullName>
    </recommendedName>
    <alternativeName>
        <fullName>Coiled-coil domain-containing protein 67</fullName>
    </alternativeName>
</protein>
<gene>
    <name evidence="7" type="primary">DEUP1</name>
    <name type="synonym">CCDC67</name>
</gene>
<dbReference type="EMBL" id="AP003969">
    <property type="status" value="NOT_ANNOTATED_CDS"/>
    <property type="molecule type" value="Genomic_DNA"/>
</dbReference>
<dbReference type="EMBL" id="AP004242">
    <property type="status" value="NOT_ANNOTATED_CDS"/>
    <property type="molecule type" value="Genomic_DNA"/>
</dbReference>
<dbReference type="EMBL" id="BC017929">
    <property type="protein sequence ID" value="AAH17929.1"/>
    <property type="status" value="ALT_SEQ"/>
    <property type="molecule type" value="mRNA"/>
</dbReference>
<dbReference type="EMBL" id="BC031247">
    <property type="protein sequence ID" value="AAH31247.2"/>
    <property type="molecule type" value="mRNA"/>
</dbReference>
<dbReference type="EMBL" id="AK058122">
    <property type="protein sequence ID" value="BAB71673.1"/>
    <property type="status" value="ALT_SEQ"/>
    <property type="molecule type" value="mRNA"/>
</dbReference>
<dbReference type="CCDS" id="CCDS44707.1">
    <molecule id="Q05D60-1"/>
</dbReference>
<dbReference type="RefSeq" id="NP_857596.2">
    <molecule id="Q05D60-1"/>
    <property type="nucleotide sequence ID" value="NM_181645.4"/>
</dbReference>
<dbReference type="RefSeq" id="XP_005273859.1">
    <molecule id="Q05D60-1"/>
    <property type="nucleotide sequence ID" value="XM_005273802.2"/>
</dbReference>
<dbReference type="RefSeq" id="XP_047282411.1">
    <molecule id="Q05D60-1"/>
    <property type="nucleotide sequence ID" value="XM_047426455.1"/>
</dbReference>
<dbReference type="SMR" id="Q05D60"/>
<dbReference type="BioGRID" id="127746">
    <property type="interactions" value="78"/>
</dbReference>
<dbReference type="FunCoup" id="Q05D60">
    <property type="interactions" value="59"/>
</dbReference>
<dbReference type="IntAct" id="Q05D60">
    <property type="interactions" value="59"/>
</dbReference>
<dbReference type="MINT" id="Q05D60"/>
<dbReference type="STRING" id="9606.ENSP00000298050"/>
<dbReference type="iPTMnet" id="Q05D60"/>
<dbReference type="PhosphoSitePlus" id="Q05D60"/>
<dbReference type="BioMuta" id="DEUP1"/>
<dbReference type="DMDM" id="156630476"/>
<dbReference type="MassIVE" id="Q05D60"/>
<dbReference type="PaxDb" id="9606-ENSP00000298050"/>
<dbReference type="PeptideAtlas" id="Q05D60"/>
<dbReference type="ProteomicsDB" id="21226"/>
<dbReference type="ProteomicsDB" id="58400">
    <molecule id="Q05D60-1"/>
</dbReference>
<dbReference type="ProteomicsDB" id="58401">
    <molecule id="Q05D60-2"/>
</dbReference>
<dbReference type="Antibodypedia" id="2572">
    <property type="antibodies" value="87 antibodies from 19 providers"/>
</dbReference>
<dbReference type="DNASU" id="159989"/>
<dbReference type="Ensembl" id="ENST00000298050.9">
    <molecule id="Q05D60-1"/>
    <property type="protein sequence ID" value="ENSP00000298050.3"/>
    <property type="gene ID" value="ENSG00000165325.15"/>
</dbReference>
<dbReference type="GeneID" id="159989"/>
<dbReference type="KEGG" id="hsa:159989"/>
<dbReference type="MANE-Select" id="ENST00000298050.9">
    <property type="protein sequence ID" value="ENSP00000298050.3"/>
    <property type="RefSeq nucleotide sequence ID" value="NM_181645.4"/>
    <property type="RefSeq protein sequence ID" value="NP_857596.2"/>
</dbReference>
<dbReference type="UCSC" id="uc001pdq.5">
    <molecule id="Q05D60-1"/>
    <property type="organism name" value="human"/>
</dbReference>
<dbReference type="UCSC" id="uc058gma.1">
    <property type="organism name" value="human"/>
</dbReference>
<dbReference type="AGR" id="HGNC:26344"/>
<dbReference type="CTD" id="159989"/>
<dbReference type="DisGeNET" id="159989"/>
<dbReference type="GeneCards" id="DEUP1"/>
<dbReference type="HGNC" id="HGNC:26344">
    <property type="gene designation" value="DEUP1"/>
</dbReference>
<dbReference type="HPA" id="ENSG00000165325">
    <property type="expression patterns" value="Group enriched (fallopian tube, testis)"/>
</dbReference>
<dbReference type="neXtProt" id="NX_Q05D60"/>
<dbReference type="OpenTargets" id="ENSG00000165325"/>
<dbReference type="PharmGKB" id="PA143485419"/>
<dbReference type="VEuPathDB" id="HostDB:ENSG00000165325"/>
<dbReference type="eggNOG" id="ENOG502QRBJ">
    <property type="taxonomic scope" value="Eukaryota"/>
</dbReference>
<dbReference type="GeneTree" id="ENSGT00940000153190"/>
<dbReference type="InParanoid" id="Q05D60"/>
<dbReference type="OMA" id="SHNTWEF"/>
<dbReference type="OrthoDB" id="10007333at2759"/>
<dbReference type="PAN-GO" id="Q05D60">
    <property type="GO annotations" value="4 GO annotations based on evolutionary models"/>
</dbReference>
<dbReference type="PhylomeDB" id="Q05D60"/>
<dbReference type="TreeFam" id="TF330595"/>
<dbReference type="PathwayCommons" id="Q05D60"/>
<dbReference type="SignaLink" id="Q05D60"/>
<dbReference type="BioGRID-ORCS" id="159989">
    <property type="hits" value="9 hits in 1119 CRISPR screens"/>
</dbReference>
<dbReference type="CD-CODE" id="2A09918C">
    <property type="entry name" value="Synthetic Condensate 000359"/>
</dbReference>
<dbReference type="CD-CODE" id="890CF536">
    <property type="entry name" value="Synthetic Condensate 000368"/>
</dbReference>
<dbReference type="CD-CODE" id="FE3CB95B">
    <property type="entry name" value="Synthetic Condensate 000371"/>
</dbReference>
<dbReference type="ChiTaRS" id="DEUP1">
    <property type="organism name" value="human"/>
</dbReference>
<dbReference type="GenomeRNAi" id="159989"/>
<dbReference type="Pharos" id="Q05D60">
    <property type="development level" value="Tbio"/>
</dbReference>
<dbReference type="PRO" id="PR:Q05D60"/>
<dbReference type="Proteomes" id="UP000005640">
    <property type="component" value="Chromosome 11"/>
</dbReference>
<dbReference type="RNAct" id="Q05D60">
    <property type="molecule type" value="protein"/>
</dbReference>
<dbReference type="Bgee" id="ENSG00000165325">
    <property type="expression patterns" value="Expressed in sperm and 94 other cell types or tissues"/>
</dbReference>
<dbReference type="ExpressionAtlas" id="Q05D60">
    <property type="expression patterns" value="baseline and differential"/>
</dbReference>
<dbReference type="GO" id="GO:0005814">
    <property type="term" value="C:centriole"/>
    <property type="evidence" value="ECO:0000318"/>
    <property type="project" value="GO_Central"/>
</dbReference>
<dbReference type="GO" id="GO:0005737">
    <property type="term" value="C:cytoplasm"/>
    <property type="evidence" value="ECO:0007669"/>
    <property type="project" value="UniProtKB-SubCell"/>
</dbReference>
<dbReference type="GO" id="GO:0098536">
    <property type="term" value="C:deuterosome"/>
    <property type="evidence" value="ECO:0000250"/>
    <property type="project" value="UniProtKB"/>
</dbReference>
<dbReference type="GO" id="GO:0042802">
    <property type="term" value="F:identical protein binding"/>
    <property type="evidence" value="ECO:0000353"/>
    <property type="project" value="IntAct"/>
</dbReference>
<dbReference type="GO" id="GO:0030030">
    <property type="term" value="P:cell projection organization"/>
    <property type="evidence" value="ECO:0007669"/>
    <property type="project" value="UniProtKB-KW"/>
</dbReference>
<dbReference type="GO" id="GO:0007099">
    <property type="term" value="P:centriole replication"/>
    <property type="evidence" value="ECO:0000318"/>
    <property type="project" value="GO_Central"/>
</dbReference>
<dbReference type="GO" id="GO:0098535">
    <property type="term" value="P:de novo centriole assembly involved in multi-ciliated epithelial cell differentiation"/>
    <property type="evidence" value="ECO:0000250"/>
    <property type="project" value="UniProtKB"/>
</dbReference>
<dbReference type="GO" id="GO:1903251">
    <property type="term" value="P:multi-ciliated epithelial cell differentiation"/>
    <property type="evidence" value="ECO:0000250"/>
    <property type="project" value="UniProtKB"/>
</dbReference>
<dbReference type="InterPro" id="IPR031470">
    <property type="entry name" value="Cep63/Deup1_N"/>
</dbReference>
<dbReference type="PANTHER" id="PTHR18875:SF5">
    <property type="entry name" value="DEUTEROSOME ASSEMBLY PROTEIN 1"/>
    <property type="match status" value="1"/>
</dbReference>
<dbReference type="PANTHER" id="PTHR18875">
    <property type="entry name" value="SARCOMA ANTIGEN NY-SAR-24/CYTOSKELETAL PROTEIN SOJO"/>
    <property type="match status" value="1"/>
</dbReference>
<dbReference type="Pfam" id="PF17045">
    <property type="entry name" value="CEP63"/>
    <property type="match status" value="1"/>
</dbReference>
<reference key="1">
    <citation type="journal article" date="2006" name="Nature">
        <title>Human chromosome 11 DNA sequence and analysis including novel gene identification.</title>
        <authorList>
            <person name="Taylor T.D."/>
            <person name="Noguchi H."/>
            <person name="Totoki Y."/>
            <person name="Toyoda A."/>
            <person name="Kuroki Y."/>
            <person name="Dewar K."/>
            <person name="Lloyd C."/>
            <person name="Itoh T."/>
            <person name="Takeda T."/>
            <person name="Kim D.-W."/>
            <person name="She X."/>
            <person name="Barlow K.F."/>
            <person name="Bloom T."/>
            <person name="Bruford E."/>
            <person name="Chang J.L."/>
            <person name="Cuomo C.A."/>
            <person name="Eichler E."/>
            <person name="FitzGerald M.G."/>
            <person name="Jaffe D.B."/>
            <person name="LaButti K."/>
            <person name="Nicol R."/>
            <person name="Park H.-S."/>
            <person name="Seaman C."/>
            <person name="Sougnez C."/>
            <person name="Yang X."/>
            <person name="Zimmer A.R."/>
            <person name="Zody M.C."/>
            <person name="Birren B.W."/>
            <person name="Nusbaum C."/>
            <person name="Fujiyama A."/>
            <person name="Hattori M."/>
            <person name="Rogers J."/>
            <person name="Lander E.S."/>
            <person name="Sakaki Y."/>
        </authorList>
    </citation>
    <scope>NUCLEOTIDE SEQUENCE [LARGE SCALE GENOMIC DNA]</scope>
</reference>
<reference key="2">
    <citation type="journal article" date="2004" name="Genome Res.">
        <title>The status, quality, and expansion of the NIH full-length cDNA project: the Mammalian Gene Collection (MGC).</title>
        <authorList>
            <consortium name="The MGC Project Team"/>
        </authorList>
    </citation>
    <scope>NUCLEOTIDE SEQUENCE [LARGE SCALE MRNA] (ISOFORMS 1 AND 2)</scope>
    <source>
        <tissue>Lung</tissue>
        <tissue>Testis</tissue>
    </source>
</reference>
<reference key="3">
    <citation type="journal article" date="2004" name="Nat. Genet.">
        <title>Complete sequencing and characterization of 21,243 full-length human cDNAs.</title>
        <authorList>
            <person name="Ota T."/>
            <person name="Suzuki Y."/>
            <person name="Nishikawa T."/>
            <person name="Otsuki T."/>
            <person name="Sugiyama T."/>
            <person name="Irie R."/>
            <person name="Wakamatsu A."/>
            <person name="Hayashi K."/>
            <person name="Sato H."/>
            <person name="Nagai K."/>
            <person name="Kimura K."/>
            <person name="Makita H."/>
            <person name="Sekine M."/>
            <person name="Obayashi M."/>
            <person name="Nishi T."/>
            <person name="Shibahara T."/>
            <person name="Tanaka T."/>
            <person name="Ishii S."/>
            <person name="Yamamoto J."/>
            <person name="Saito K."/>
            <person name="Kawai Y."/>
            <person name="Isono Y."/>
            <person name="Nakamura Y."/>
            <person name="Nagahari K."/>
            <person name="Murakami K."/>
            <person name="Yasuda T."/>
            <person name="Iwayanagi T."/>
            <person name="Wagatsuma M."/>
            <person name="Shiratori A."/>
            <person name="Sudo H."/>
            <person name="Hosoiri T."/>
            <person name="Kaku Y."/>
            <person name="Kodaira H."/>
            <person name="Kondo H."/>
            <person name="Sugawara M."/>
            <person name="Takahashi M."/>
            <person name="Kanda K."/>
            <person name="Yokoi T."/>
            <person name="Furuya T."/>
            <person name="Kikkawa E."/>
            <person name="Omura Y."/>
            <person name="Abe K."/>
            <person name="Kamihara K."/>
            <person name="Katsuta N."/>
            <person name="Sato K."/>
            <person name="Tanikawa M."/>
            <person name="Yamazaki M."/>
            <person name="Ninomiya K."/>
            <person name="Ishibashi T."/>
            <person name="Yamashita H."/>
            <person name="Murakawa K."/>
            <person name="Fujimori K."/>
            <person name="Tanai H."/>
            <person name="Kimata M."/>
            <person name="Watanabe M."/>
            <person name="Hiraoka S."/>
            <person name="Chiba Y."/>
            <person name="Ishida S."/>
            <person name="Ono Y."/>
            <person name="Takiguchi S."/>
            <person name="Watanabe S."/>
            <person name="Yosida M."/>
            <person name="Hotuta T."/>
            <person name="Kusano J."/>
            <person name="Kanehori K."/>
            <person name="Takahashi-Fujii A."/>
            <person name="Hara H."/>
            <person name="Tanase T.-O."/>
            <person name="Nomura Y."/>
            <person name="Togiya S."/>
            <person name="Komai F."/>
            <person name="Hara R."/>
            <person name="Takeuchi K."/>
            <person name="Arita M."/>
            <person name="Imose N."/>
            <person name="Musashino K."/>
            <person name="Yuuki H."/>
            <person name="Oshima A."/>
            <person name="Sasaki N."/>
            <person name="Aotsuka S."/>
            <person name="Yoshikawa Y."/>
            <person name="Matsunawa H."/>
            <person name="Ichihara T."/>
            <person name="Shiohata N."/>
            <person name="Sano S."/>
            <person name="Moriya S."/>
            <person name="Momiyama H."/>
            <person name="Satoh N."/>
            <person name="Takami S."/>
            <person name="Terashima Y."/>
            <person name="Suzuki O."/>
            <person name="Nakagawa S."/>
            <person name="Senoh A."/>
            <person name="Mizoguchi H."/>
            <person name="Goto Y."/>
            <person name="Shimizu F."/>
            <person name="Wakebe H."/>
            <person name="Hishigaki H."/>
            <person name="Watanabe T."/>
            <person name="Sugiyama A."/>
            <person name="Takemoto M."/>
            <person name="Kawakami B."/>
            <person name="Yamazaki M."/>
            <person name="Watanabe K."/>
            <person name="Kumagai A."/>
            <person name="Itakura S."/>
            <person name="Fukuzumi Y."/>
            <person name="Fujimori Y."/>
            <person name="Komiyama M."/>
            <person name="Tashiro H."/>
            <person name="Tanigami A."/>
            <person name="Fujiwara T."/>
            <person name="Ono T."/>
            <person name="Yamada K."/>
            <person name="Fujii Y."/>
            <person name="Ozaki K."/>
            <person name="Hirao M."/>
            <person name="Ohmori Y."/>
            <person name="Kawabata A."/>
            <person name="Hikiji T."/>
            <person name="Kobatake N."/>
            <person name="Inagaki H."/>
            <person name="Ikema Y."/>
            <person name="Okamoto S."/>
            <person name="Okitani R."/>
            <person name="Kawakami T."/>
            <person name="Noguchi S."/>
            <person name="Itoh T."/>
            <person name="Shigeta K."/>
            <person name="Senba T."/>
            <person name="Matsumura K."/>
            <person name="Nakajima Y."/>
            <person name="Mizuno T."/>
            <person name="Morinaga M."/>
            <person name="Sasaki M."/>
            <person name="Togashi T."/>
            <person name="Oyama M."/>
            <person name="Hata H."/>
            <person name="Watanabe M."/>
            <person name="Komatsu T."/>
            <person name="Mizushima-Sugano J."/>
            <person name="Satoh T."/>
            <person name="Shirai Y."/>
            <person name="Takahashi Y."/>
            <person name="Nakagawa K."/>
            <person name="Okumura K."/>
            <person name="Nagase T."/>
            <person name="Nomura N."/>
            <person name="Kikuchi H."/>
            <person name="Masuho Y."/>
            <person name="Yamashita R."/>
            <person name="Nakai K."/>
            <person name="Yada T."/>
            <person name="Nakamura Y."/>
            <person name="Ohara O."/>
            <person name="Isogai T."/>
            <person name="Sugano S."/>
        </authorList>
    </citation>
    <scope>NUCLEOTIDE SEQUENCE [LARGE SCALE MRNA] OF 57-604 (ISOFORM 1)</scope>
    <scope>VARIANT LYS-504</scope>
    <source>
        <tissue>Testis</tissue>
    </source>
</reference>